<sequence>MTAQMFTIALLLSLSAIAAAGTIKTAPARTPSTQDDASFPPDGAPVKRFDAFTTGFGHSKRNFDEIDRSGFGFAKKNFDEIDRSGFGFNKRNFDEIDRSGFGFNKRNFDEIDRSGFGFNKRNFDEIDRSGFGFNKRNFDEIDRSGFGFNKRNFDEIDRSGFGFNKRNFDEIDRSGFGFNKRNFDEIDRSGFGFVKRVYVPRYIANLYKRNFDEIDRSGFGFNKRNFDEIDRTGFGFHKRDYDVFPDKRNFDEIDRSGFGFVRRNVE</sequence>
<accession>Q9NL82</accession>
<organism evidence="4">
    <name type="scientific">Procambarus clarkii</name>
    <name type="common">Red swamp crayfish</name>
    <dbReference type="NCBI Taxonomy" id="6728"/>
    <lineage>
        <taxon>Eukaryota</taxon>
        <taxon>Metazoa</taxon>
        <taxon>Ecdysozoa</taxon>
        <taxon>Arthropoda</taxon>
        <taxon>Crustacea</taxon>
        <taxon>Multicrustacea</taxon>
        <taxon>Malacostraca</taxon>
        <taxon>Eumalacostraca</taxon>
        <taxon>Eucarida</taxon>
        <taxon>Decapoda</taxon>
        <taxon>Pleocyemata</taxon>
        <taxon>Astacidea</taxon>
        <taxon>Astacoidea</taxon>
        <taxon>Cambaridae</taxon>
        <taxon>Procambarus</taxon>
    </lineage>
</organism>
<feature type="signal peptide" evidence="1">
    <location>
        <begin position="1"/>
        <end position="20"/>
    </location>
</feature>
<feature type="propeptide" id="PRO_0000021934" evidence="2">
    <location>
        <begin position="21"/>
        <end position="46"/>
    </location>
</feature>
<feature type="peptide" id="PRO_0000021935" description="Orcomyotropin-like peptide">
    <location>
        <begin position="49"/>
        <end position="59"/>
    </location>
</feature>
<feature type="peptide" id="PRO_0000021936" description="Orcokinin-like peptide 1">
    <location>
        <begin position="62"/>
        <end position="74"/>
    </location>
</feature>
<feature type="peptide" id="PRO_0000021937" description="Orcokinin">
    <location>
        <begin position="77"/>
        <end position="89"/>
    </location>
</feature>
<feature type="peptide" id="PRO_0000021938" description="Orcokinin">
    <location>
        <begin position="92"/>
        <end position="104"/>
    </location>
</feature>
<feature type="peptide" id="PRO_0000021939" description="Orcokinin">
    <location>
        <begin position="107"/>
        <end position="119"/>
    </location>
</feature>
<feature type="peptide" id="PRO_0000021940" description="Orcokinin">
    <location>
        <begin position="122"/>
        <end position="134"/>
    </location>
</feature>
<feature type="peptide" id="PRO_0000021941" description="Orcokinin">
    <location>
        <begin position="137"/>
        <end position="149"/>
    </location>
</feature>
<feature type="peptide" id="PRO_0000021942" description="Orcokinin">
    <location>
        <begin position="152"/>
        <end position="164"/>
    </location>
</feature>
<feature type="peptide" id="PRO_0000021943" description="Orcokinin">
    <location>
        <begin position="167"/>
        <end position="179"/>
    </location>
</feature>
<feature type="peptide" id="PRO_0000021944" description="Orcokinin-like peptide 2">
    <location>
        <begin position="182"/>
        <end position="194"/>
    </location>
</feature>
<feature type="peptide" id="PRO_0000021945" description="Orcokinin-like peptide 3">
    <location>
        <begin position="197"/>
        <end position="207"/>
    </location>
</feature>
<feature type="peptide" id="PRO_0000021946" description="Orcokinin">
    <location>
        <begin position="210"/>
        <end position="222"/>
    </location>
</feature>
<feature type="peptide" id="PRO_0000021947" description="Orcokinin-like peptide 4">
    <location>
        <begin position="225"/>
        <end position="237"/>
    </location>
</feature>
<feature type="propeptide" id="PRO_0000021948" evidence="2">
    <location>
        <begin position="240"/>
        <end position="246"/>
    </location>
</feature>
<feature type="peptide" id="PRO_0000021949" description="Orcokinin-like peptide 2">
    <location>
        <begin position="249"/>
        <end position="261"/>
    </location>
</feature>
<feature type="propeptide" id="PRO_0000021950" evidence="2">
    <location>
        <begin position="264"/>
        <end position="266"/>
    </location>
</feature>
<keyword id="KW-0165">Cleavage on pair of basic residues</keyword>
<keyword id="KW-0527">Neuropeptide</keyword>
<keyword id="KW-0964">Secreted</keyword>
<keyword id="KW-0732">Signal</keyword>
<name>ORCKB_PROCL</name>
<comment type="function">
    <text evidence="3">Myotropic peptides that enhance both the frequency and amplitude of spontaneous hindgut contractions.</text>
</comment>
<comment type="subcellular location">
    <subcellularLocation>
        <location>Secreted</location>
    </subcellularLocation>
</comment>
<comment type="mass spectrometry">
    <molecule>Orcomyotropin-like peptide</molecule>
</comment>
<comment type="mass spectrometry">
    <molecule>Orcokinin-like peptide 1</molecule>
</comment>
<comment type="mass spectrometry">
    <molecule>Orcokinin</molecule>
</comment>
<comment type="mass spectrometry">
    <molecule>Orcokinin-like peptide 2</molecule>
</comment>
<comment type="mass spectrometry">
    <molecule>Orcokinin-like peptide 3</molecule>
</comment>
<comment type="mass spectrometry">
    <molecule>Orcokinin-like peptide 4</molecule>
</comment>
<comment type="similarity">
    <text evidence="3">Belongs to the orcokinin family.</text>
</comment>
<protein>
    <recommendedName>
        <fullName>Orcokinin peptides type B</fullName>
    </recommendedName>
    <component>
        <recommendedName>
            <fullName>Orcomyotropin-like peptide</fullName>
        </recommendedName>
    </component>
    <component>
        <recommendedName>
            <fullName>Orcokinin-like peptide 1</fullName>
        </recommendedName>
    </component>
    <component>
        <recommendedName>
            <fullName>Orcokinin</fullName>
        </recommendedName>
    </component>
    <component>
        <recommendedName>
            <fullName>Orcokinin-like peptide 2</fullName>
        </recommendedName>
    </component>
    <component>
        <recommendedName>
            <fullName>Orcokinin-like peptide 3</fullName>
        </recommendedName>
    </component>
    <component>
        <recommendedName>
            <fullName>Orcokinin-like peptide 4</fullName>
        </recommendedName>
    </component>
</protein>
<evidence type="ECO:0000255" key="1"/>
<evidence type="ECO:0000269" key="2">
    <source>
    </source>
</evidence>
<evidence type="ECO:0000305" key="3"/>
<evidence type="ECO:0000312" key="4">
    <source>
        <dbReference type="EMBL" id="BAA94754.1"/>
    </source>
</evidence>
<reference evidence="3" key="1">
    <citation type="journal article" date="2000" name="Gen. Comp. Endocrinol.">
        <title>Identification of orcokinin gene-related peptides in the brain of the crayfish Procambarus clarkii by the combination of MALDI-TOF and on-line capillary HPLC/Q-Tof mass spectrometries and molecular cloning.</title>
        <authorList>
            <person name="Yasuda-Kamatani Y."/>
            <person name="Yasuda A."/>
        </authorList>
    </citation>
    <scope>NUCLEOTIDE SEQUENCE [MRNA]</scope>
    <scope>MASS SPECTROMETRY</scope>
    <source>
        <tissue evidence="2">Olfactory bulb</tissue>
    </source>
</reference>
<dbReference type="EMBL" id="AB029169">
    <property type="protein sequence ID" value="BAA94754.1"/>
    <property type="molecule type" value="mRNA"/>
</dbReference>
<dbReference type="OrthoDB" id="6093641at2759"/>
<dbReference type="GO" id="GO:0005576">
    <property type="term" value="C:extracellular region"/>
    <property type="evidence" value="ECO:0007669"/>
    <property type="project" value="UniProtKB-SubCell"/>
</dbReference>
<dbReference type="GO" id="GO:0005184">
    <property type="term" value="F:neuropeptide hormone activity"/>
    <property type="evidence" value="ECO:0000303"/>
    <property type="project" value="UniProtKB"/>
</dbReference>
<dbReference type="GO" id="GO:0007218">
    <property type="term" value="P:neuropeptide signaling pathway"/>
    <property type="evidence" value="ECO:0007669"/>
    <property type="project" value="UniProtKB-KW"/>
</dbReference>
<dbReference type="Gene3D" id="2.160.20.80">
    <property type="entry name" value="E3 ubiquitin-protein ligase SopA"/>
    <property type="match status" value="1"/>
</dbReference>
<dbReference type="InterPro" id="IPR040384">
    <property type="entry name" value="ORCKA/B"/>
</dbReference>
<dbReference type="PANTHER" id="PTHR33864:SF1">
    <property type="entry name" value="NEUROPEPTIDE-LIKE PROTEIN"/>
    <property type="match status" value="1"/>
</dbReference>
<dbReference type="PANTHER" id="PTHR33864">
    <property type="entry name" value="NEUROPEPTIDE-LIKE PROTEIN-RELATED"/>
    <property type="match status" value="1"/>
</dbReference>
<dbReference type="SUPFAM" id="SSF141571">
    <property type="entry name" value="Pentapeptide repeat-like"/>
    <property type="match status" value="1"/>
</dbReference>
<proteinExistence type="evidence at protein level"/>